<keyword id="KW-0131">Cell cycle</keyword>
<keyword id="KW-0132">Cell division</keyword>
<keyword id="KW-0143">Chaperone</keyword>
<keyword id="KW-0963">Cytoplasm</keyword>
<keyword id="KW-0413">Isomerase</keyword>
<keyword id="KW-0697">Rotamase</keyword>
<dbReference type="EC" id="5.2.1.8" evidence="1"/>
<dbReference type="EMBL" id="CP000413">
    <property type="protein sequence ID" value="ABJ60536.1"/>
    <property type="molecule type" value="Genomic_DNA"/>
</dbReference>
<dbReference type="RefSeq" id="WP_003647139.1">
    <property type="nucleotide sequence ID" value="NZ_WBMG01000002.1"/>
</dbReference>
<dbReference type="SMR" id="Q042T6"/>
<dbReference type="GeneID" id="29639560"/>
<dbReference type="KEGG" id="lga:LGAS_1167"/>
<dbReference type="HOGENOM" id="CLU_033058_3_2_9"/>
<dbReference type="BioCyc" id="LGAS324831:G1G6Y-1163-MONOMER"/>
<dbReference type="Proteomes" id="UP000000664">
    <property type="component" value="Chromosome"/>
</dbReference>
<dbReference type="GO" id="GO:0005737">
    <property type="term" value="C:cytoplasm"/>
    <property type="evidence" value="ECO:0007669"/>
    <property type="project" value="UniProtKB-SubCell"/>
</dbReference>
<dbReference type="GO" id="GO:0003755">
    <property type="term" value="F:peptidyl-prolyl cis-trans isomerase activity"/>
    <property type="evidence" value="ECO:0007669"/>
    <property type="project" value="UniProtKB-UniRule"/>
</dbReference>
<dbReference type="GO" id="GO:0044183">
    <property type="term" value="F:protein folding chaperone"/>
    <property type="evidence" value="ECO:0007669"/>
    <property type="project" value="TreeGrafter"/>
</dbReference>
<dbReference type="GO" id="GO:0043022">
    <property type="term" value="F:ribosome binding"/>
    <property type="evidence" value="ECO:0007669"/>
    <property type="project" value="TreeGrafter"/>
</dbReference>
<dbReference type="GO" id="GO:0051083">
    <property type="term" value="P:'de novo' cotranslational protein folding"/>
    <property type="evidence" value="ECO:0007669"/>
    <property type="project" value="TreeGrafter"/>
</dbReference>
<dbReference type="GO" id="GO:0051301">
    <property type="term" value="P:cell division"/>
    <property type="evidence" value="ECO:0007669"/>
    <property type="project" value="UniProtKB-KW"/>
</dbReference>
<dbReference type="GO" id="GO:0061077">
    <property type="term" value="P:chaperone-mediated protein folding"/>
    <property type="evidence" value="ECO:0007669"/>
    <property type="project" value="TreeGrafter"/>
</dbReference>
<dbReference type="GO" id="GO:0015031">
    <property type="term" value="P:protein transport"/>
    <property type="evidence" value="ECO:0007669"/>
    <property type="project" value="UniProtKB-UniRule"/>
</dbReference>
<dbReference type="GO" id="GO:0043335">
    <property type="term" value="P:protein unfolding"/>
    <property type="evidence" value="ECO:0007669"/>
    <property type="project" value="TreeGrafter"/>
</dbReference>
<dbReference type="FunFam" id="3.10.50.40:FF:000001">
    <property type="entry name" value="Trigger factor"/>
    <property type="match status" value="1"/>
</dbReference>
<dbReference type="Gene3D" id="3.10.50.40">
    <property type="match status" value="1"/>
</dbReference>
<dbReference type="Gene3D" id="3.30.70.1050">
    <property type="entry name" value="Trigger factor ribosome-binding domain"/>
    <property type="match status" value="1"/>
</dbReference>
<dbReference type="Gene3D" id="1.10.3120.10">
    <property type="entry name" value="Trigger factor, C-terminal domain"/>
    <property type="match status" value="1"/>
</dbReference>
<dbReference type="HAMAP" id="MF_00303">
    <property type="entry name" value="Trigger_factor_Tig"/>
    <property type="match status" value="1"/>
</dbReference>
<dbReference type="InterPro" id="IPR046357">
    <property type="entry name" value="PPIase_dom_sf"/>
</dbReference>
<dbReference type="InterPro" id="IPR001179">
    <property type="entry name" value="PPIase_FKBP_dom"/>
</dbReference>
<dbReference type="InterPro" id="IPR005215">
    <property type="entry name" value="Trig_fac"/>
</dbReference>
<dbReference type="InterPro" id="IPR008880">
    <property type="entry name" value="Trigger_fac_C"/>
</dbReference>
<dbReference type="InterPro" id="IPR037041">
    <property type="entry name" value="Trigger_fac_C_sf"/>
</dbReference>
<dbReference type="InterPro" id="IPR008881">
    <property type="entry name" value="Trigger_fac_ribosome-bd_bac"/>
</dbReference>
<dbReference type="InterPro" id="IPR036611">
    <property type="entry name" value="Trigger_fac_ribosome-bd_sf"/>
</dbReference>
<dbReference type="InterPro" id="IPR027304">
    <property type="entry name" value="Trigger_fact/SurA_dom_sf"/>
</dbReference>
<dbReference type="NCBIfam" id="TIGR00115">
    <property type="entry name" value="tig"/>
    <property type="match status" value="1"/>
</dbReference>
<dbReference type="PANTHER" id="PTHR30560">
    <property type="entry name" value="TRIGGER FACTOR CHAPERONE AND PEPTIDYL-PROLYL CIS/TRANS ISOMERASE"/>
    <property type="match status" value="1"/>
</dbReference>
<dbReference type="PANTHER" id="PTHR30560:SF3">
    <property type="entry name" value="TRIGGER FACTOR-LIKE PROTEIN TIG, CHLOROPLASTIC"/>
    <property type="match status" value="1"/>
</dbReference>
<dbReference type="Pfam" id="PF00254">
    <property type="entry name" value="FKBP_C"/>
    <property type="match status" value="1"/>
</dbReference>
<dbReference type="Pfam" id="PF05698">
    <property type="entry name" value="Trigger_C"/>
    <property type="match status" value="1"/>
</dbReference>
<dbReference type="Pfam" id="PF05697">
    <property type="entry name" value="Trigger_N"/>
    <property type="match status" value="1"/>
</dbReference>
<dbReference type="PIRSF" id="PIRSF003095">
    <property type="entry name" value="Trigger_factor"/>
    <property type="match status" value="1"/>
</dbReference>
<dbReference type="SUPFAM" id="SSF54534">
    <property type="entry name" value="FKBP-like"/>
    <property type="match status" value="1"/>
</dbReference>
<dbReference type="SUPFAM" id="SSF109998">
    <property type="entry name" value="Triger factor/SurA peptide-binding domain-like"/>
    <property type="match status" value="1"/>
</dbReference>
<dbReference type="SUPFAM" id="SSF102735">
    <property type="entry name" value="Trigger factor ribosome-binding domain"/>
    <property type="match status" value="1"/>
</dbReference>
<dbReference type="PROSITE" id="PS50059">
    <property type="entry name" value="FKBP_PPIASE"/>
    <property type="match status" value="1"/>
</dbReference>
<sequence length="449" mass="49817">MSVKWEKTGKTSGELTFEISQEEVKKGLDQAFKRVKKNLRVPGFRKGHVSRVVFDQFYGEEALYEDALNIVLPEAYAAAVKEAGIDPVGQPQITPVSMDKNKPWEMKATVSVKPEVKLGDYKGIEVPKQSTRVLVKDVDAELNKRREQNAELVLKDGKAAKGDTVTIDYTGTIDGKPFDGGSAQNYSLELGSGTFIPGFEDQLIGHKAGDDVDVVVTFPEDYGAKDLAGKEAHFATKIHEVKSKELPKLDDEFAKDVDDSVESLDELKDKIKKDLKKHKEEDAKDAIQDAAIKGAVENATIDEVPQAMIDEDVQNQLNQYLGNMQRQGIDPQTYFKLTGTTEAQLREQLAKGAAERVKTNLVLEAIVAKEKLDASADEIKQEIKDLAHDYNMDEKVVRRSLSDDMLKHDIAIRKAIDLVADKAKQVAKKATKKSTAKKSTKEDEKKADK</sequence>
<comment type="function">
    <text evidence="1">Involved in protein export. Acts as a chaperone by maintaining the newly synthesized protein in an open conformation. Functions as a peptidyl-prolyl cis-trans isomerase.</text>
</comment>
<comment type="catalytic activity">
    <reaction evidence="1">
        <text>[protein]-peptidylproline (omega=180) = [protein]-peptidylproline (omega=0)</text>
        <dbReference type="Rhea" id="RHEA:16237"/>
        <dbReference type="Rhea" id="RHEA-COMP:10747"/>
        <dbReference type="Rhea" id="RHEA-COMP:10748"/>
        <dbReference type="ChEBI" id="CHEBI:83833"/>
        <dbReference type="ChEBI" id="CHEBI:83834"/>
        <dbReference type="EC" id="5.2.1.8"/>
    </reaction>
</comment>
<comment type="subcellular location">
    <subcellularLocation>
        <location>Cytoplasm</location>
    </subcellularLocation>
    <text evidence="1">About half TF is bound to the ribosome near the polypeptide exit tunnel while the other half is free in the cytoplasm.</text>
</comment>
<comment type="domain">
    <text evidence="1">Consists of 3 domains; the N-terminus binds the ribosome, the middle domain has PPIase activity, while the C-terminus has intrinsic chaperone activity on its own.</text>
</comment>
<comment type="similarity">
    <text evidence="1">Belongs to the FKBP-type PPIase family. Tig subfamily.</text>
</comment>
<proteinExistence type="inferred from homology"/>
<evidence type="ECO:0000255" key="1">
    <source>
        <dbReference type="HAMAP-Rule" id="MF_00303"/>
    </source>
</evidence>
<evidence type="ECO:0000256" key="2">
    <source>
        <dbReference type="SAM" id="MobiDB-lite"/>
    </source>
</evidence>
<organism>
    <name type="scientific">Lactobacillus gasseri (strain ATCC 33323 / DSM 20243 / BCRC 14619 / CIP 102991 / JCM 1131 / KCTC 3163 / NCIMB 11718 / NCTC 13722 / AM63)</name>
    <dbReference type="NCBI Taxonomy" id="324831"/>
    <lineage>
        <taxon>Bacteria</taxon>
        <taxon>Bacillati</taxon>
        <taxon>Bacillota</taxon>
        <taxon>Bacilli</taxon>
        <taxon>Lactobacillales</taxon>
        <taxon>Lactobacillaceae</taxon>
        <taxon>Lactobacillus</taxon>
    </lineage>
</organism>
<accession>Q042T6</accession>
<name>TIG_LACGA</name>
<feature type="chain" id="PRO_1000022697" description="Trigger factor">
    <location>
        <begin position="1"/>
        <end position="449"/>
    </location>
</feature>
<feature type="domain" description="PPIase FKBP-type" evidence="1">
    <location>
        <begin position="162"/>
        <end position="247"/>
    </location>
</feature>
<feature type="region of interest" description="Disordered" evidence="2">
    <location>
        <begin position="427"/>
        <end position="449"/>
    </location>
</feature>
<feature type="compositionally biased region" description="Basic residues" evidence="2">
    <location>
        <begin position="427"/>
        <end position="438"/>
    </location>
</feature>
<feature type="compositionally biased region" description="Basic and acidic residues" evidence="2">
    <location>
        <begin position="439"/>
        <end position="449"/>
    </location>
</feature>
<reference key="1">
    <citation type="journal article" date="2006" name="Proc. Natl. Acad. Sci. U.S.A.">
        <title>Comparative genomics of the lactic acid bacteria.</title>
        <authorList>
            <person name="Makarova K.S."/>
            <person name="Slesarev A."/>
            <person name="Wolf Y.I."/>
            <person name="Sorokin A."/>
            <person name="Mirkin B."/>
            <person name="Koonin E.V."/>
            <person name="Pavlov A."/>
            <person name="Pavlova N."/>
            <person name="Karamychev V."/>
            <person name="Polouchine N."/>
            <person name="Shakhova V."/>
            <person name="Grigoriev I."/>
            <person name="Lou Y."/>
            <person name="Rohksar D."/>
            <person name="Lucas S."/>
            <person name="Huang K."/>
            <person name="Goodstein D.M."/>
            <person name="Hawkins T."/>
            <person name="Plengvidhya V."/>
            <person name="Welker D."/>
            <person name="Hughes J."/>
            <person name="Goh Y."/>
            <person name="Benson A."/>
            <person name="Baldwin K."/>
            <person name="Lee J.-H."/>
            <person name="Diaz-Muniz I."/>
            <person name="Dosti B."/>
            <person name="Smeianov V."/>
            <person name="Wechter W."/>
            <person name="Barabote R."/>
            <person name="Lorca G."/>
            <person name="Altermann E."/>
            <person name="Barrangou R."/>
            <person name="Ganesan B."/>
            <person name="Xie Y."/>
            <person name="Rawsthorne H."/>
            <person name="Tamir D."/>
            <person name="Parker C."/>
            <person name="Breidt F."/>
            <person name="Broadbent J.R."/>
            <person name="Hutkins R."/>
            <person name="O'Sullivan D."/>
            <person name="Steele J."/>
            <person name="Unlu G."/>
            <person name="Saier M.H. Jr."/>
            <person name="Klaenhammer T."/>
            <person name="Richardson P."/>
            <person name="Kozyavkin S."/>
            <person name="Weimer B.C."/>
            <person name="Mills D.A."/>
        </authorList>
    </citation>
    <scope>NUCLEOTIDE SEQUENCE [LARGE SCALE GENOMIC DNA]</scope>
    <source>
        <strain>ATCC 33323 / DSM 20243 / BCRC 14619 / CIP 102991 / JCM 1131 / KCTC 3163 / NCIMB 11718 / NCTC 13722 / AM63</strain>
    </source>
</reference>
<gene>
    <name evidence="1" type="primary">tig</name>
    <name type="ordered locus">LGAS_1167</name>
</gene>
<protein>
    <recommendedName>
        <fullName evidence="1">Trigger factor</fullName>
        <shortName evidence="1">TF</shortName>
        <ecNumber evidence="1">5.2.1.8</ecNumber>
    </recommendedName>
    <alternativeName>
        <fullName evidence="1">PPIase</fullName>
    </alternativeName>
</protein>